<sequence length="284" mass="30140">MSAQLINGKEVSQKRLQAVAEAVAQRQQDNLHMPCLAVVLVGGDPASAVYVRNKKTACQKCGIKSLSYELPESTSQEELLALVDRLNADSEVDGILVQLPLPKHLDSQAVLERISPDKDVDGFHPYNVGRLAVKMPLMRPCTPKGVMTLLEAYGIDPKGKKAVVVGASNIVGRPQALELLLARATVTVCHSATENLTDEVAGADILVVGVGIPNFVKGEWIKPGAVVIDVGINRLDDGSLCGDVEFETAKERAAMITPVPGGVGPMTIATLMENTLHAASLHDA</sequence>
<keyword id="KW-0028">Amino-acid biosynthesis</keyword>
<keyword id="KW-0368">Histidine biosynthesis</keyword>
<keyword id="KW-0378">Hydrolase</keyword>
<keyword id="KW-0486">Methionine biosynthesis</keyword>
<keyword id="KW-0511">Multifunctional enzyme</keyword>
<keyword id="KW-0521">NADP</keyword>
<keyword id="KW-0554">One-carbon metabolism</keyword>
<keyword id="KW-0560">Oxidoreductase</keyword>
<keyword id="KW-0658">Purine biosynthesis</keyword>
<dbReference type="EC" id="1.5.1.5" evidence="1"/>
<dbReference type="EC" id="3.5.4.9" evidence="1"/>
<dbReference type="EMBL" id="AL157959">
    <property type="protein sequence ID" value="CAM07653.1"/>
    <property type="molecule type" value="Genomic_DNA"/>
</dbReference>
<dbReference type="PIR" id="F82031">
    <property type="entry name" value="F82031"/>
</dbReference>
<dbReference type="RefSeq" id="WP_002227750.1">
    <property type="nucleotide sequence ID" value="NC_003116.1"/>
</dbReference>
<dbReference type="SMR" id="Q9JWI9"/>
<dbReference type="EnsemblBacteria" id="CAM07653">
    <property type="protein sequence ID" value="CAM07653"/>
    <property type="gene ID" value="NMA0354"/>
</dbReference>
<dbReference type="GeneID" id="93387007"/>
<dbReference type="KEGG" id="nma:NMA0354"/>
<dbReference type="HOGENOM" id="CLU_034045_2_1_4"/>
<dbReference type="UniPathway" id="UPA00193"/>
<dbReference type="Proteomes" id="UP000000626">
    <property type="component" value="Chromosome"/>
</dbReference>
<dbReference type="GO" id="GO:0005829">
    <property type="term" value="C:cytosol"/>
    <property type="evidence" value="ECO:0007669"/>
    <property type="project" value="TreeGrafter"/>
</dbReference>
<dbReference type="GO" id="GO:0004477">
    <property type="term" value="F:methenyltetrahydrofolate cyclohydrolase activity"/>
    <property type="evidence" value="ECO:0007669"/>
    <property type="project" value="UniProtKB-UniRule"/>
</dbReference>
<dbReference type="GO" id="GO:0004488">
    <property type="term" value="F:methylenetetrahydrofolate dehydrogenase (NADP+) activity"/>
    <property type="evidence" value="ECO:0007669"/>
    <property type="project" value="UniProtKB-UniRule"/>
</dbReference>
<dbReference type="GO" id="GO:0000105">
    <property type="term" value="P:L-histidine biosynthetic process"/>
    <property type="evidence" value="ECO:0007669"/>
    <property type="project" value="UniProtKB-KW"/>
</dbReference>
<dbReference type="GO" id="GO:0009086">
    <property type="term" value="P:methionine biosynthetic process"/>
    <property type="evidence" value="ECO:0007669"/>
    <property type="project" value="UniProtKB-KW"/>
</dbReference>
<dbReference type="GO" id="GO:0006164">
    <property type="term" value="P:purine nucleotide biosynthetic process"/>
    <property type="evidence" value="ECO:0007669"/>
    <property type="project" value="UniProtKB-KW"/>
</dbReference>
<dbReference type="GO" id="GO:0035999">
    <property type="term" value="P:tetrahydrofolate interconversion"/>
    <property type="evidence" value="ECO:0007669"/>
    <property type="project" value="UniProtKB-UniRule"/>
</dbReference>
<dbReference type="CDD" id="cd01080">
    <property type="entry name" value="NAD_bind_m-THF_DH_Cyclohyd"/>
    <property type="match status" value="1"/>
</dbReference>
<dbReference type="FunFam" id="3.40.50.10860:FF:000001">
    <property type="entry name" value="Bifunctional protein FolD"/>
    <property type="match status" value="1"/>
</dbReference>
<dbReference type="FunFam" id="3.40.50.720:FF:000006">
    <property type="entry name" value="Bifunctional protein FolD"/>
    <property type="match status" value="1"/>
</dbReference>
<dbReference type="Gene3D" id="3.40.50.10860">
    <property type="entry name" value="Leucine Dehydrogenase, chain A, domain 1"/>
    <property type="match status" value="1"/>
</dbReference>
<dbReference type="Gene3D" id="3.40.50.720">
    <property type="entry name" value="NAD(P)-binding Rossmann-like Domain"/>
    <property type="match status" value="1"/>
</dbReference>
<dbReference type="HAMAP" id="MF_01576">
    <property type="entry name" value="THF_DHG_CYH"/>
    <property type="match status" value="1"/>
</dbReference>
<dbReference type="InterPro" id="IPR046346">
    <property type="entry name" value="Aminoacid_DH-like_N_sf"/>
</dbReference>
<dbReference type="InterPro" id="IPR036291">
    <property type="entry name" value="NAD(P)-bd_dom_sf"/>
</dbReference>
<dbReference type="InterPro" id="IPR000672">
    <property type="entry name" value="THF_DH/CycHdrlase"/>
</dbReference>
<dbReference type="InterPro" id="IPR020630">
    <property type="entry name" value="THF_DH/CycHdrlase_cat_dom"/>
</dbReference>
<dbReference type="InterPro" id="IPR020867">
    <property type="entry name" value="THF_DH/CycHdrlase_CS"/>
</dbReference>
<dbReference type="InterPro" id="IPR020631">
    <property type="entry name" value="THF_DH/CycHdrlase_NAD-bd_dom"/>
</dbReference>
<dbReference type="NCBIfam" id="NF008058">
    <property type="entry name" value="PRK10792.1"/>
    <property type="match status" value="1"/>
</dbReference>
<dbReference type="NCBIfam" id="NF010783">
    <property type="entry name" value="PRK14186.1"/>
    <property type="match status" value="1"/>
</dbReference>
<dbReference type="PANTHER" id="PTHR48099:SF5">
    <property type="entry name" value="C-1-TETRAHYDROFOLATE SYNTHASE, CYTOPLASMIC"/>
    <property type="match status" value="1"/>
</dbReference>
<dbReference type="PANTHER" id="PTHR48099">
    <property type="entry name" value="C-1-TETRAHYDROFOLATE SYNTHASE, CYTOPLASMIC-RELATED"/>
    <property type="match status" value="1"/>
</dbReference>
<dbReference type="Pfam" id="PF00763">
    <property type="entry name" value="THF_DHG_CYH"/>
    <property type="match status" value="1"/>
</dbReference>
<dbReference type="Pfam" id="PF02882">
    <property type="entry name" value="THF_DHG_CYH_C"/>
    <property type="match status" value="1"/>
</dbReference>
<dbReference type="PRINTS" id="PR00085">
    <property type="entry name" value="THFDHDRGNASE"/>
</dbReference>
<dbReference type="SUPFAM" id="SSF53223">
    <property type="entry name" value="Aminoacid dehydrogenase-like, N-terminal domain"/>
    <property type="match status" value="1"/>
</dbReference>
<dbReference type="SUPFAM" id="SSF51735">
    <property type="entry name" value="NAD(P)-binding Rossmann-fold domains"/>
    <property type="match status" value="1"/>
</dbReference>
<dbReference type="PROSITE" id="PS00766">
    <property type="entry name" value="THF_DHG_CYH_1"/>
    <property type="match status" value="1"/>
</dbReference>
<dbReference type="PROSITE" id="PS00767">
    <property type="entry name" value="THF_DHG_CYH_2"/>
    <property type="match status" value="1"/>
</dbReference>
<feature type="chain" id="PRO_0000268415" description="Bifunctional protein FolD">
    <location>
        <begin position="1"/>
        <end position="284"/>
    </location>
</feature>
<feature type="binding site" evidence="1">
    <location>
        <begin position="166"/>
        <end position="168"/>
    </location>
    <ligand>
        <name>NADP(+)</name>
        <dbReference type="ChEBI" id="CHEBI:58349"/>
    </ligand>
</feature>
<feature type="binding site" evidence="1">
    <location>
        <position position="191"/>
    </location>
    <ligand>
        <name>NADP(+)</name>
        <dbReference type="ChEBI" id="CHEBI:58349"/>
    </ligand>
</feature>
<feature type="binding site" evidence="1">
    <location>
        <position position="232"/>
    </location>
    <ligand>
        <name>NADP(+)</name>
        <dbReference type="ChEBI" id="CHEBI:58349"/>
    </ligand>
</feature>
<gene>
    <name evidence="1" type="primary">folD</name>
    <name type="ordered locus">NMA0354</name>
</gene>
<protein>
    <recommendedName>
        <fullName evidence="1">Bifunctional protein FolD</fullName>
    </recommendedName>
    <domain>
        <recommendedName>
            <fullName evidence="1">Methylenetetrahydrofolate dehydrogenase</fullName>
            <ecNumber evidence="1">1.5.1.5</ecNumber>
        </recommendedName>
    </domain>
    <domain>
        <recommendedName>
            <fullName evidence="1">Methenyltetrahydrofolate cyclohydrolase</fullName>
            <ecNumber evidence="1">3.5.4.9</ecNumber>
        </recommendedName>
    </domain>
</protein>
<name>FOLD_NEIMA</name>
<accession>Q9JWI9</accession>
<accession>A1IPI4</accession>
<comment type="function">
    <text evidence="1">Catalyzes the oxidation of 5,10-methylenetetrahydrofolate to 5,10-methenyltetrahydrofolate and then the hydrolysis of 5,10-methenyltetrahydrofolate to 10-formyltetrahydrofolate.</text>
</comment>
<comment type="catalytic activity">
    <reaction evidence="1">
        <text>(6R)-5,10-methylene-5,6,7,8-tetrahydrofolate + NADP(+) = (6R)-5,10-methenyltetrahydrofolate + NADPH</text>
        <dbReference type="Rhea" id="RHEA:22812"/>
        <dbReference type="ChEBI" id="CHEBI:15636"/>
        <dbReference type="ChEBI" id="CHEBI:57455"/>
        <dbReference type="ChEBI" id="CHEBI:57783"/>
        <dbReference type="ChEBI" id="CHEBI:58349"/>
        <dbReference type="EC" id="1.5.1.5"/>
    </reaction>
</comment>
<comment type="catalytic activity">
    <reaction evidence="1">
        <text>(6R)-5,10-methenyltetrahydrofolate + H2O = (6R)-10-formyltetrahydrofolate + H(+)</text>
        <dbReference type="Rhea" id="RHEA:23700"/>
        <dbReference type="ChEBI" id="CHEBI:15377"/>
        <dbReference type="ChEBI" id="CHEBI:15378"/>
        <dbReference type="ChEBI" id="CHEBI:57455"/>
        <dbReference type="ChEBI" id="CHEBI:195366"/>
        <dbReference type="EC" id="3.5.4.9"/>
    </reaction>
</comment>
<comment type="pathway">
    <text evidence="1">One-carbon metabolism; tetrahydrofolate interconversion.</text>
</comment>
<comment type="subunit">
    <text evidence="1">Homodimer.</text>
</comment>
<comment type="similarity">
    <text evidence="1">Belongs to the tetrahydrofolate dehydrogenase/cyclohydrolase family.</text>
</comment>
<evidence type="ECO:0000255" key="1">
    <source>
        <dbReference type="HAMAP-Rule" id="MF_01576"/>
    </source>
</evidence>
<proteinExistence type="inferred from homology"/>
<reference key="1">
    <citation type="journal article" date="2000" name="Nature">
        <title>Complete DNA sequence of a serogroup A strain of Neisseria meningitidis Z2491.</title>
        <authorList>
            <person name="Parkhill J."/>
            <person name="Achtman M."/>
            <person name="James K.D."/>
            <person name="Bentley S.D."/>
            <person name="Churcher C.M."/>
            <person name="Klee S.R."/>
            <person name="Morelli G."/>
            <person name="Basham D."/>
            <person name="Brown D."/>
            <person name="Chillingworth T."/>
            <person name="Davies R.M."/>
            <person name="Davis P."/>
            <person name="Devlin K."/>
            <person name="Feltwell T."/>
            <person name="Hamlin N."/>
            <person name="Holroyd S."/>
            <person name="Jagels K."/>
            <person name="Leather S."/>
            <person name="Moule S."/>
            <person name="Mungall K.L."/>
            <person name="Quail M.A."/>
            <person name="Rajandream M.A."/>
            <person name="Rutherford K.M."/>
            <person name="Simmonds M."/>
            <person name="Skelton J."/>
            <person name="Whitehead S."/>
            <person name="Spratt B.G."/>
            <person name="Barrell B.G."/>
        </authorList>
    </citation>
    <scope>NUCLEOTIDE SEQUENCE [LARGE SCALE GENOMIC DNA]</scope>
    <source>
        <strain>DSM 15465 / Z2491</strain>
    </source>
</reference>
<organism>
    <name type="scientific">Neisseria meningitidis serogroup A / serotype 4A (strain DSM 15465 / Z2491)</name>
    <dbReference type="NCBI Taxonomy" id="122587"/>
    <lineage>
        <taxon>Bacteria</taxon>
        <taxon>Pseudomonadati</taxon>
        <taxon>Pseudomonadota</taxon>
        <taxon>Betaproteobacteria</taxon>
        <taxon>Neisseriales</taxon>
        <taxon>Neisseriaceae</taxon>
        <taxon>Neisseria</taxon>
    </lineage>
</organism>